<name>RL15_ANGJA</name>
<keyword id="KW-0963">Cytoplasm</keyword>
<keyword id="KW-0687">Ribonucleoprotein</keyword>
<keyword id="KW-0689">Ribosomal protein</keyword>
<organism>
    <name type="scientific">Anguilla japonica</name>
    <name type="common">Japanese eel</name>
    <dbReference type="NCBI Taxonomy" id="7937"/>
    <lineage>
        <taxon>Eukaryota</taxon>
        <taxon>Metazoa</taxon>
        <taxon>Chordata</taxon>
        <taxon>Craniata</taxon>
        <taxon>Vertebrata</taxon>
        <taxon>Euteleostomi</taxon>
        <taxon>Actinopterygii</taxon>
        <taxon>Neopterygii</taxon>
        <taxon>Teleostei</taxon>
        <taxon>Anguilliformes</taxon>
        <taxon>Anguillidae</taxon>
        <taxon>Anguilla</taxon>
    </lineage>
</organism>
<comment type="function">
    <text evidence="2">Component of the large ribosomal subunit. The ribosome is a large ribonucleoprotein complex responsible for the synthesis of proteins in the cell.</text>
</comment>
<comment type="subunit">
    <text evidence="2">Component of the large ribosomal subunit.</text>
</comment>
<comment type="subcellular location">
    <subcellularLocation>
        <location evidence="2">Cytoplasm</location>
    </subcellularLocation>
</comment>
<comment type="similarity">
    <text evidence="3">Belongs to the eukaryotic ribosomal protein eL15 family.</text>
</comment>
<accession>Q7T3P1</accession>
<gene>
    <name type="primary">rpl15</name>
</gene>
<reference key="1">
    <citation type="submission" date="2003-03" db="EMBL/GenBank/DDBJ databases">
        <title>Evaluating the potential of ribosomal protein L15 as a novel marker for phylogenetic analysis: a comparative analysis of 15 teleost RPL15 cDNAs.</title>
        <authorList>
            <person name="Song P."/>
            <person name="Zhang J."/>
            <person name="Xiang Z."/>
        </authorList>
    </citation>
    <scope>NUCLEOTIDE SEQUENCE [MRNA]</scope>
    <source>
        <tissue>Liver</tissue>
    </source>
</reference>
<feature type="initiator methionine" description="Removed" evidence="1">
    <location>
        <position position="1"/>
    </location>
</feature>
<feature type="chain" id="PRO_0000127533" description="Large ribosomal subunit protein eL15">
    <location>
        <begin position="2"/>
        <end position="204"/>
    </location>
</feature>
<dbReference type="EMBL" id="AY249411">
    <property type="protein sequence ID" value="AAP35248.1"/>
    <property type="molecule type" value="mRNA"/>
</dbReference>
<dbReference type="SMR" id="Q7T3P1"/>
<dbReference type="GO" id="GO:0022625">
    <property type="term" value="C:cytosolic large ribosomal subunit"/>
    <property type="evidence" value="ECO:0007669"/>
    <property type="project" value="TreeGrafter"/>
</dbReference>
<dbReference type="GO" id="GO:0003723">
    <property type="term" value="F:RNA binding"/>
    <property type="evidence" value="ECO:0007669"/>
    <property type="project" value="TreeGrafter"/>
</dbReference>
<dbReference type="GO" id="GO:0003735">
    <property type="term" value="F:structural constituent of ribosome"/>
    <property type="evidence" value="ECO:0007669"/>
    <property type="project" value="InterPro"/>
</dbReference>
<dbReference type="GO" id="GO:0002181">
    <property type="term" value="P:cytoplasmic translation"/>
    <property type="evidence" value="ECO:0007669"/>
    <property type="project" value="TreeGrafter"/>
</dbReference>
<dbReference type="FunFam" id="3.40.1120.10:FF:000001">
    <property type="entry name" value="Ribosomal protein L15"/>
    <property type="match status" value="1"/>
</dbReference>
<dbReference type="Gene3D" id="3.40.1120.10">
    <property type="entry name" value="Ribosomal protein l15e"/>
    <property type="match status" value="1"/>
</dbReference>
<dbReference type="InterPro" id="IPR024794">
    <property type="entry name" value="Rbsml_eL15_core_dom_sf"/>
</dbReference>
<dbReference type="InterPro" id="IPR000439">
    <property type="entry name" value="Ribosomal_eL15"/>
</dbReference>
<dbReference type="InterPro" id="IPR020925">
    <property type="entry name" value="Ribosomal_eL15_CS"/>
</dbReference>
<dbReference type="InterPro" id="IPR012678">
    <property type="entry name" value="Ribosomal_uL23/eL15/eS24_sf"/>
</dbReference>
<dbReference type="NCBIfam" id="NF003269">
    <property type="entry name" value="PRK04243.1"/>
    <property type="match status" value="1"/>
</dbReference>
<dbReference type="PANTHER" id="PTHR11847:SF4">
    <property type="entry name" value="LARGE RIBOSOMAL SUBUNIT PROTEIN EL15"/>
    <property type="match status" value="1"/>
</dbReference>
<dbReference type="PANTHER" id="PTHR11847">
    <property type="entry name" value="RIBOSOMAL PROTEIN L15"/>
    <property type="match status" value="1"/>
</dbReference>
<dbReference type="Pfam" id="PF00827">
    <property type="entry name" value="Ribosomal_L15e"/>
    <property type="match status" value="1"/>
</dbReference>
<dbReference type="SMART" id="SM01384">
    <property type="entry name" value="Ribosomal_L15e"/>
    <property type="match status" value="1"/>
</dbReference>
<dbReference type="SUPFAM" id="SSF54189">
    <property type="entry name" value="Ribosomal proteins S24e, L23 and L15e"/>
    <property type="match status" value="1"/>
</dbReference>
<dbReference type="PROSITE" id="PS01194">
    <property type="entry name" value="RIBOSOMAL_L15E"/>
    <property type="match status" value="1"/>
</dbReference>
<protein>
    <recommendedName>
        <fullName evidence="3">Large ribosomal subunit protein eL15</fullName>
    </recommendedName>
    <alternativeName>
        <fullName>60S ribosomal protein L15</fullName>
    </alternativeName>
</protein>
<evidence type="ECO:0000250" key="1"/>
<evidence type="ECO:0000250" key="2">
    <source>
        <dbReference type="UniProtKB" id="P61313"/>
    </source>
</evidence>
<evidence type="ECO:0000305" key="3"/>
<sequence>MGAYKYMQELWRKKQSDVMRFLLRVRCWQYRQLSGLHRAPRPTRPDKARRLGYKAKQGYVIYRIRVRRGGRKRPVPKGATYGKPVHHGVNQIKFARSLQSTAEERAGRHCGALRVLNSYWVGEDSTYKFFEVILIDPFHKAVRRDPDAQWITKAVHKHREMRGLTSAGKKSRGLGKGHKFHLTIGGSRRAAWRRRNTLQLHRYR</sequence>
<proteinExistence type="evidence at transcript level"/>